<proteinExistence type="inferred from homology"/>
<reference key="1">
    <citation type="journal article" date="2005" name="J. Bacteriol.">
        <title>Whole-genome sequence analysis of Pseudomonas syringae pv. phaseolicola 1448A reveals divergence among pathovars in genes involved in virulence and transposition.</title>
        <authorList>
            <person name="Joardar V."/>
            <person name="Lindeberg M."/>
            <person name="Jackson R.W."/>
            <person name="Selengut J."/>
            <person name="Dodson R."/>
            <person name="Brinkac L.M."/>
            <person name="Daugherty S.C."/>
            <person name="DeBoy R.T."/>
            <person name="Durkin A.S."/>
            <person name="Gwinn Giglio M."/>
            <person name="Madupu R."/>
            <person name="Nelson W.C."/>
            <person name="Rosovitz M.J."/>
            <person name="Sullivan S.A."/>
            <person name="Crabtree J."/>
            <person name="Creasy T."/>
            <person name="Davidsen T.M."/>
            <person name="Haft D.H."/>
            <person name="Zafar N."/>
            <person name="Zhou L."/>
            <person name="Halpin R."/>
            <person name="Holley T."/>
            <person name="Khouri H.M."/>
            <person name="Feldblyum T.V."/>
            <person name="White O."/>
            <person name="Fraser C.M."/>
            <person name="Chatterjee A.K."/>
            <person name="Cartinhour S."/>
            <person name="Schneider D."/>
            <person name="Mansfield J.W."/>
            <person name="Collmer A."/>
            <person name="Buell R."/>
        </authorList>
    </citation>
    <scope>NUCLEOTIDE SEQUENCE [LARGE SCALE GENOMIC DNA]</scope>
    <source>
        <strain>1448A / Race 6</strain>
    </source>
</reference>
<dbReference type="EMBL" id="CP000058">
    <property type="protein sequence ID" value="AAZ35961.1"/>
    <property type="molecule type" value="Genomic_DNA"/>
</dbReference>
<dbReference type="RefSeq" id="WP_002555479.1">
    <property type="nucleotide sequence ID" value="NC_005773.3"/>
</dbReference>
<dbReference type="SMR" id="Q48D46"/>
<dbReference type="GeneID" id="98285428"/>
<dbReference type="KEGG" id="psp:PSPPH_4582"/>
<dbReference type="eggNOG" id="COG0093">
    <property type="taxonomic scope" value="Bacteria"/>
</dbReference>
<dbReference type="HOGENOM" id="CLU_095071_2_1_6"/>
<dbReference type="Proteomes" id="UP000000551">
    <property type="component" value="Chromosome"/>
</dbReference>
<dbReference type="GO" id="GO:0022625">
    <property type="term" value="C:cytosolic large ribosomal subunit"/>
    <property type="evidence" value="ECO:0007669"/>
    <property type="project" value="TreeGrafter"/>
</dbReference>
<dbReference type="GO" id="GO:0070180">
    <property type="term" value="F:large ribosomal subunit rRNA binding"/>
    <property type="evidence" value="ECO:0007669"/>
    <property type="project" value="TreeGrafter"/>
</dbReference>
<dbReference type="GO" id="GO:0003735">
    <property type="term" value="F:structural constituent of ribosome"/>
    <property type="evidence" value="ECO:0007669"/>
    <property type="project" value="InterPro"/>
</dbReference>
<dbReference type="GO" id="GO:0006412">
    <property type="term" value="P:translation"/>
    <property type="evidence" value="ECO:0007669"/>
    <property type="project" value="UniProtKB-UniRule"/>
</dbReference>
<dbReference type="CDD" id="cd00337">
    <property type="entry name" value="Ribosomal_uL14"/>
    <property type="match status" value="1"/>
</dbReference>
<dbReference type="FunFam" id="2.40.150.20:FF:000001">
    <property type="entry name" value="50S ribosomal protein L14"/>
    <property type="match status" value="1"/>
</dbReference>
<dbReference type="Gene3D" id="2.40.150.20">
    <property type="entry name" value="Ribosomal protein L14"/>
    <property type="match status" value="1"/>
</dbReference>
<dbReference type="HAMAP" id="MF_01367">
    <property type="entry name" value="Ribosomal_uL14"/>
    <property type="match status" value="1"/>
</dbReference>
<dbReference type="InterPro" id="IPR000218">
    <property type="entry name" value="Ribosomal_uL14"/>
</dbReference>
<dbReference type="InterPro" id="IPR005745">
    <property type="entry name" value="Ribosomal_uL14_bac-type"/>
</dbReference>
<dbReference type="InterPro" id="IPR019972">
    <property type="entry name" value="Ribosomal_uL14_CS"/>
</dbReference>
<dbReference type="InterPro" id="IPR036853">
    <property type="entry name" value="Ribosomal_uL14_sf"/>
</dbReference>
<dbReference type="NCBIfam" id="TIGR01067">
    <property type="entry name" value="rplN_bact"/>
    <property type="match status" value="1"/>
</dbReference>
<dbReference type="PANTHER" id="PTHR11761">
    <property type="entry name" value="50S/60S RIBOSOMAL PROTEIN L14/L23"/>
    <property type="match status" value="1"/>
</dbReference>
<dbReference type="PANTHER" id="PTHR11761:SF3">
    <property type="entry name" value="LARGE RIBOSOMAL SUBUNIT PROTEIN UL14M"/>
    <property type="match status" value="1"/>
</dbReference>
<dbReference type="Pfam" id="PF00238">
    <property type="entry name" value="Ribosomal_L14"/>
    <property type="match status" value="1"/>
</dbReference>
<dbReference type="SMART" id="SM01374">
    <property type="entry name" value="Ribosomal_L14"/>
    <property type="match status" value="1"/>
</dbReference>
<dbReference type="SUPFAM" id="SSF50193">
    <property type="entry name" value="Ribosomal protein L14"/>
    <property type="match status" value="1"/>
</dbReference>
<dbReference type="PROSITE" id="PS00049">
    <property type="entry name" value="RIBOSOMAL_L14"/>
    <property type="match status" value="1"/>
</dbReference>
<comment type="function">
    <text evidence="1">Binds to 23S rRNA. Forms part of two intersubunit bridges in the 70S ribosome.</text>
</comment>
<comment type="subunit">
    <text evidence="1">Part of the 50S ribosomal subunit. Forms a cluster with proteins L3 and L19. In the 70S ribosome, L14 and L19 interact and together make contacts with the 16S rRNA in bridges B5 and B8.</text>
</comment>
<comment type="similarity">
    <text evidence="1">Belongs to the universal ribosomal protein uL14 family.</text>
</comment>
<feature type="chain" id="PRO_0000266529" description="Large ribosomal subunit protein uL14">
    <location>
        <begin position="1"/>
        <end position="122"/>
    </location>
</feature>
<keyword id="KW-0687">Ribonucleoprotein</keyword>
<keyword id="KW-0689">Ribosomal protein</keyword>
<keyword id="KW-0694">RNA-binding</keyword>
<keyword id="KW-0699">rRNA-binding</keyword>
<protein>
    <recommendedName>
        <fullName evidence="1">Large ribosomal subunit protein uL14</fullName>
    </recommendedName>
    <alternativeName>
        <fullName evidence="2">50S ribosomal protein L14</fullName>
    </alternativeName>
</protein>
<sequence length="122" mass="13410">MIQTQSMLDVADNSGARRVMCIKVLGGSHRRYAGIGDIIKVTVKEAIPRGKVKKGQVMTAVVVRTRHGVRRADGSIIRFDGNAAVLLNNKQEPIGTRIFGPVTRELRTEKFMKIVSLAPEVL</sequence>
<name>RL14_PSE14</name>
<organism>
    <name type="scientific">Pseudomonas savastanoi pv. phaseolicola (strain 1448A / Race 6)</name>
    <name type="common">Pseudomonas syringae pv. phaseolicola (strain 1448A / Race 6)</name>
    <dbReference type="NCBI Taxonomy" id="264730"/>
    <lineage>
        <taxon>Bacteria</taxon>
        <taxon>Pseudomonadati</taxon>
        <taxon>Pseudomonadota</taxon>
        <taxon>Gammaproteobacteria</taxon>
        <taxon>Pseudomonadales</taxon>
        <taxon>Pseudomonadaceae</taxon>
        <taxon>Pseudomonas</taxon>
    </lineage>
</organism>
<evidence type="ECO:0000255" key="1">
    <source>
        <dbReference type="HAMAP-Rule" id="MF_01367"/>
    </source>
</evidence>
<evidence type="ECO:0000305" key="2"/>
<accession>Q48D46</accession>
<gene>
    <name evidence="1" type="primary">rplN</name>
    <name type="ordered locus">PSPPH_4582</name>
</gene>